<comment type="function">
    <text evidence="1">Catalyzes the NAD-dependent reduction of succinylglutamate semialdehyde into succinylglutamate.</text>
</comment>
<comment type="catalytic activity">
    <reaction evidence="1">
        <text>N-succinyl-L-glutamate 5-semialdehyde + NAD(+) + H2O = N-succinyl-L-glutamate + NADH + 2 H(+)</text>
        <dbReference type="Rhea" id="RHEA:10812"/>
        <dbReference type="ChEBI" id="CHEBI:15377"/>
        <dbReference type="ChEBI" id="CHEBI:15378"/>
        <dbReference type="ChEBI" id="CHEBI:57540"/>
        <dbReference type="ChEBI" id="CHEBI:57945"/>
        <dbReference type="ChEBI" id="CHEBI:58520"/>
        <dbReference type="ChEBI" id="CHEBI:58763"/>
        <dbReference type="EC" id="1.2.1.71"/>
    </reaction>
</comment>
<comment type="pathway">
    <text evidence="1">Amino-acid degradation; L-arginine degradation via AST pathway; L-glutamate and succinate from L-arginine: step 4/5.</text>
</comment>
<comment type="similarity">
    <text evidence="1">Belongs to the aldehyde dehydrogenase family. AstD subfamily.</text>
</comment>
<sequence length="492" mass="53180">MTLWINGDWITGQGERRRKTNPVSAEILWQGNDANAAQVAEACQAAREAFPRWARQPFAARQAIVEKFAALLEAHKADLTEVIARETGKPRWEAATEVTAMINKIAISIKAYHARTGEQKSELVDGAATLRHRPHGVLAVFGPYNFPGHLPNGHIVPALLAGNTLIFKPSELTPWTGETVIKLWERAGLPAGVLNLVQGGREIGQALSSLDDLDGLLFTGSASTGYQLHRQLSGQPEKILALEMGGNNPLIIEDATNMDAAVHLTLQSAFITAGQRCTCARRLLVKQGAQGDAFLARLVDVAGRLQPGRWDDDPQPFIGGLISAQAAQHVMEAWRQREALGGRTLLAPRKVKEGTSLLTPGIIELTGVADVPDEEVFGPLLNVWRYAHFDEAIRLANNTRFGLSCGLVSTDRAQFEQLLLEARAGIVNWNKPLTGAASTAPFGGVGASGNHRPSAWYAADYCAWPMASLESPELTLPATLSPGLDFSRREAV</sequence>
<organism>
    <name type="scientific">Salmonella agona (strain SL483)</name>
    <dbReference type="NCBI Taxonomy" id="454166"/>
    <lineage>
        <taxon>Bacteria</taxon>
        <taxon>Pseudomonadati</taxon>
        <taxon>Pseudomonadota</taxon>
        <taxon>Gammaproteobacteria</taxon>
        <taxon>Enterobacterales</taxon>
        <taxon>Enterobacteriaceae</taxon>
        <taxon>Salmonella</taxon>
    </lineage>
</organism>
<feature type="chain" id="PRO_1000138053" description="N-succinylglutamate 5-semialdehyde dehydrogenase">
    <location>
        <begin position="1"/>
        <end position="492"/>
    </location>
</feature>
<feature type="active site" evidence="1">
    <location>
        <position position="243"/>
    </location>
</feature>
<feature type="active site" evidence="1">
    <location>
        <position position="277"/>
    </location>
</feature>
<feature type="binding site" evidence="1">
    <location>
        <begin position="220"/>
        <end position="225"/>
    </location>
    <ligand>
        <name>NAD(+)</name>
        <dbReference type="ChEBI" id="CHEBI:57540"/>
    </ligand>
</feature>
<evidence type="ECO:0000255" key="1">
    <source>
        <dbReference type="HAMAP-Rule" id="MF_01174"/>
    </source>
</evidence>
<protein>
    <recommendedName>
        <fullName evidence="1">N-succinylglutamate 5-semialdehyde dehydrogenase</fullName>
        <ecNumber evidence="1">1.2.1.71</ecNumber>
    </recommendedName>
    <alternativeName>
        <fullName evidence="1">Succinylglutamic semialdehyde dehydrogenase</fullName>
        <shortName evidence="1">SGSD</shortName>
    </alternativeName>
</protein>
<accession>B5F7J0</accession>
<keyword id="KW-0056">Arginine metabolism</keyword>
<keyword id="KW-0520">NAD</keyword>
<keyword id="KW-0560">Oxidoreductase</keyword>
<proteinExistence type="inferred from homology"/>
<gene>
    <name evidence="1" type="primary">astD</name>
    <name type="ordered locus">SeAg_B1868</name>
</gene>
<dbReference type="EC" id="1.2.1.71" evidence="1"/>
<dbReference type="EMBL" id="CP001138">
    <property type="protein sequence ID" value="ACH51116.1"/>
    <property type="molecule type" value="Genomic_DNA"/>
</dbReference>
<dbReference type="RefSeq" id="WP_000177283.1">
    <property type="nucleotide sequence ID" value="NC_011149.1"/>
</dbReference>
<dbReference type="SMR" id="B5F7J0"/>
<dbReference type="KEGG" id="sea:SeAg_B1868"/>
<dbReference type="HOGENOM" id="CLU_005391_1_0_6"/>
<dbReference type="UniPathway" id="UPA00185">
    <property type="reaction ID" value="UER00282"/>
</dbReference>
<dbReference type="Proteomes" id="UP000008819">
    <property type="component" value="Chromosome"/>
</dbReference>
<dbReference type="GO" id="GO:0043824">
    <property type="term" value="F:succinylglutamate-semialdehyde dehydrogenase activity"/>
    <property type="evidence" value="ECO:0007669"/>
    <property type="project" value="UniProtKB-EC"/>
</dbReference>
<dbReference type="GO" id="GO:0019544">
    <property type="term" value="P:arginine catabolic process to glutamate"/>
    <property type="evidence" value="ECO:0007669"/>
    <property type="project" value="UniProtKB-UniRule"/>
</dbReference>
<dbReference type="GO" id="GO:0019545">
    <property type="term" value="P:arginine catabolic process to succinate"/>
    <property type="evidence" value="ECO:0007669"/>
    <property type="project" value="UniProtKB-UniRule"/>
</dbReference>
<dbReference type="CDD" id="cd07095">
    <property type="entry name" value="ALDH_SGSD_AstD"/>
    <property type="match status" value="1"/>
</dbReference>
<dbReference type="FunFam" id="3.40.309.10:FF:000013">
    <property type="entry name" value="N-succinylglutamate 5-semialdehyde dehydrogenase"/>
    <property type="match status" value="1"/>
</dbReference>
<dbReference type="FunFam" id="3.40.605.10:FF:000010">
    <property type="entry name" value="N-succinylglutamate 5-semialdehyde dehydrogenase"/>
    <property type="match status" value="1"/>
</dbReference>
<dbReference type="Gene3D" id="3.40.605.10">
    <property type="entry name" value="Aldehyde Dehydrogenase, Chain A, domain 1"/>
    <property type="match status" value="1"/>
</dbReference>
<dbReference type="Gene3D" id="3.40.309.10">
    <property type="entry name" value="Aldehyde Dehydrogenase, Chain A, domain 2"/>
    <property type="match status" value="1"/>
</dbReference>
<dbReference type="HAMAP" id="MF_01174">
    <property type="entry name" value="Aldedh_AstD"/>
    <property type="match status" value="1"/>
</dbReference>
<dbReference type="InterPro" id="IPR016161">
    <property type="entry name" value="Ald_DH/histidinol_DH"/>
</dbReference>
<dbReference type="InterPro" id="IPR016163">
    <property type="entry name" value="Ald_DH_C"/>
</dbReference>
<dbReference type="InterPro" id="IPR016160">
    <property type="entry name" value="Ald_DH_CS_CYS"/>
</dbReference>
<dbReference type="InterPro" id="IPR029510">
    <property type="entry name" value="Ald_DH_CS_GLU"/>
</dbReference>
<dbReference type="InterPro" id="IPR016162">
    <property type="entry name" value="Ald_DH_N"/>
</dbReference>
<dbReference type="InterPro" id="IPR015590">
    <property type="entry name" value="Aldehyde_DH_dom"/>
</dbReference>
<dbReference type="InterPro" id="IPR017649">
    <property type="entry name" value="SuccinylGlu_semiald_DH_AstD"/>
</dbReference>
<dbReference type="NCBIfam" id="TIGR03240">
    <property type="entry name" value="arg_catab_astD"/>
    <property type="match status" value="1"/>
</dbReference>
<dbReference type="NCBIfam" id="NF006992">
    <property type="entry name" value="PRK09457.1"/>
    <property type="match status" value="1"/>
</dbReference>
<dbReference type="PANTHER" id="PTHR11699">
    <property type="entry name" value="ALDEHYDE DEHYDROGENASE-RELATED"/>
    <property type="match status" value="1"/>
</dbReference>
<dbReference type="Pfam" id="PF00171">
    <property type="entry name" value="Aldedh"/>
    <property type="match status" value="1"/>
</dbReference>
<dbReference type="SUPFAM" id="SSF53720">
    <property type="entry name" value="ALDH-like"/>
    <property type="match status" value="1"/>
</dbReference>
<dbReference type="PROSITE" id="PS00070">
    <property type="entry name" value="ALDEHYDE_DEHYDR_CYS"/>
    <property type="match status" value="1"/>
</dbReference>
<dbReference type="PROSITE" id="PS00687">
    <property type="entry name" value="ALDEHYDE_DEHYDR_GLU"/>
    <property type="match status" value="1"/>
</dbReference>
<name>ASTD_SALA4</name>
<reference key="1">
    <citation type="journal article" date="2011" name="J. Bacteriol.">
        <title>Comparative genomics of 28 Salmonella enterica isolates: evidence for CRISPR-mediated adaptive sublineage evolution.</title>
        <authorList>
            <person name="Fricke W.F."/>
            <person name="Mammel M.K."/>
            <person name="McDermott P.F."/>
            <person name="Tartera C."/>
            <person name="White D.G."/>
            <person name="Leclerc J.E."/>
            <person name="Ravel J."/>
            <person name="Cebula T.A."/>
        </authorList>
    </citation>
    <scope>NUCLEOTIDE SEQUENCE [LARGE SCALE GENOMIC DNA]</scope>
    <source>
        <strain>SL483</strain>
    </source>
</reference>